<gene>
    <name evidence="1" type="primary">pepT</name>
    <name type="ordered locus">LACR_1996</name>
</gene>
<keyword id="KW-0031">Aminopeptidase</keyword>
<keyword id="KW-0963">Cytoplasm</keyword>
<keyword id="KW-0378">Hydrolase</keyword>
<keyword id="KW-0479">Metal-binding</keyword>
<keyword id="KW-0482">Metalloprotease</keyword>
<keyword id="KW-0645">Protease</keyword>
<keyword id="KW-0862">Zinc</keyword>
<protein>
    <recommendedName>
        <fullName evidence="1">Peptidase T</fullName>
        <ecNumber evidence="1">3.4.11.4</ecNumber>
    </recommendedName>
    <alternativeName>
        <fullName evidence="1">Aminotripeptidase</fullName>
        <shortName evidence="1">Tripeptidase</shortName>
    </alternativeName>
    <alternativeName>
        <fullName evidence="1">Tripeptide aminopeptidase</fullName>
    </alternativeName>
</protein>
<accession>Q02X44</accession>
<name>PEPT_LACLS</name>
<sequence length="413" mass="45946">MKYEKLLPRFLEYVKVNTRSDENSTTTPSTQALVEFAHKMGEDMKALGLKDVHYLESNGYVIGTIPANTDKKVRKIGLLAHLDTADFNAEGVNPQILENYDGESVIQLGDTEFTLDPKDFPNLKNYKGQTLVHTDGTTLLGSDDKSGVAEIMTLADYLLNINPDFEHGEIRVGFGPDEEIGVGADKFDVADFDVDFAYTVDGGPLGELQYETFSAAGAVIEFQGKNVHPGTAKNMMVNALQLAIDYHNALPEFDRPEKTEGREGFFHLLKLDGTPEEARAQYIIRDHEEGKFNERKALMQEIADKMNAELGQNRVKPVIKDQYYNMAQIIEKDMSIIDIAKKAMENLDIAPIIEPIRGGTDGSKISFMGLPTPNLFAGGENMHGRFEFVSVQTMEKAVDTLLEIIRLNNEVAK</sequence>
<reference key="1">
    <citation type="journal article" date="2006" name="Proc. Natl. Acad. Sci. U.S.A.">
        <title>Comparative genomics of the lactic acid bacteria.</title>
        <authorList>
            <person name="Makarova K.S."/>
            <person name="Slesarev A."/>
            <person name="Wolf Y.I."/>
            <person name="Sorokin A."/>
            <person name="Mirkin B."/>
            <person name="Koonin E.V."/>
            <person name="Pavlov A."/>
            <person name="Pavlova N."/>
            <person name="Karamychev V."/>
            <person name="Polouchine N."/>
            <person name="Shakhova V."/>
            <person name="Grigoriev I."/>
            <person name="Lou Y."/>
            <person name="Rohksar D."/>
            <person name="Lucas S."/>
            <person name="Huang K."/>
            <person name="Goodstein D.M."/>
            <person name="Hawkins T."/>
            <person name="Plengvidhya V."/>
            <person name="Welker D."/>
            <person name="Hughes J."/>
            <person name="Goh Y."/>
            <person name="Benson A."/>
            <person name="Baldwin K."/>
            <person name="Lee J.-H."/>
            <person name="Diaz-Muniz I."/>
            <person name="Dosti B."/>
            <person name="Smeianov V."/>
            <person name="Wechter W."/>
            <person name="Barabote R."/>
            <person name="Lorca G."/>
            <person name="Altermann E."/>
            <person name="Barrangou R."/>
            <person name="Ganesan B."/>
            <person name="Xie Y."/>
            <person name="Rawsthorne H."/>
            <person name="Tamir D."/>
            <person name="Parker C."/>
            <person name="Breidt F."/>
            <person name="Broadbent J.R."/>
            <person name="Hutkins R."/>
            <person name="O'Sullivan D."/>
            <person name="Steele J."/>
            <person name="Unlu G."/>
            <person name="Saier M.H. Jr."/>
            <person name="Klaenhammer T."/>
            <person name="Richardson P."/>
            <person name="Kozyavkin S."/>
            <person name="Weimer B.C."/>
            <person name="Mills D.A."/>
        </authorList>
    </citation>
    <scope>NUCLEOTIDE SEQUENCE [LARGE SCALE GENOMIC DNA]</scope>
    <source>
        <strain>SK11</strain>
    </source>
</reference>
<organism>
    <name type="scientific">Lactococcus lactis subsp. cremoris (strain SK11)</name>
    <dbReference type="NCBI Taxonomy" id="272622"/>
    <lineage>
        <taxon>Bacteria</taxon>
        <taxon>Bacillati</taxon>
        <taxon>Bacillota</taxon>
        <taxon>Bacilli</taxon>
        <taxon>Lactobacillales</taxon>
        <taxon>Streptococcaceae</taxon>
        <taxon>Lactococcus</taxon>
        <taxon>Lactococcus cremoris subsp. cremoris</taxon>
    </lineage>
</organism>
<comment type="function">
    <text evidence="1">Cleaves the N-terminal amino acid of tripeptides.</text>
</comment>
<comment type="catalytic activity">
    <reaction evidence="1">
        <text>Release of the N-terminal residue from a tripeptide.</text>
        <dbReference type="EC" id="3.4.11.4"/>
    </reaction>
</comment>
<comment type="cofactor">
    <cofactor evidence="1">
        <name>Zn(2+)</name>
        <dbReference type="ChEBI" id="CHEBI:29105"/>
    </cofactor>
    <text evidence="1">Binds 2 Zn(2+) ions per subunit.</text>
</comment>
<comment type="subcellular location">
    <subcellularLocation>
        <location evidence="1">Cytoplasm</location>
    </subcellularLocation>
</comment>
<comment type="similarity">
    <text evidence="1">Belongs to the peptidase M20B family.</text>
</comment>
<feature type="chain" id="PRO_1000017848" description="Peptidase T">
    <location>
        <begin position="1"/>
        <end position="413"/>
    </location>
</feature>
<feature type="active site" evidence="1">
    <location>
        <position position="83"/>
    </location>
</feature>
<feature type="active site" description="Proton acceptor" evidence="1">
    <location>
        <position position="178"/>
    </location>
</feature>
<feature type="binding site" evidence="1">
    <location>
        <position position="81"/>
    </location>
    <ligand>
        <name>Zn(2+)</name>
        <dbReference type="ChEBI" id="CHEBI:29105"/>
        <label>1</label>
    </ligand>
</feature>
<feature type="binding site" evidence="1">
    <location>
        <position position="143"/>
    </location>
    <ligand>
        <name>Zn(2+)</name>
        <dbReference type="ChEBI" id="CHEBI:29105"/>
        <label>1</label>
    </ligand>
</feature>
<feature type="binding site" evidence="1">
    <location>
        <position position="143"/>
    </location>
    <ligand>
        <name>Zn(2+)</name>
        <dbReference type="ChEBI" id="CHEBI:29105"/>
        <label>2</label>
    </ligand>
</feature>
<feature type="binding site" evidence="1">
    <location>
        <position position="179"/>
    </location>
    <ligand>
        <name>Zn(2+)</name>
        <dbReference type="ChEBI" id="CHEBI:29105"/>
        <label>2</label>
    </ligand>
</feature>
<feature type="binding site" evidence="1">
    <location>
        <position position="201"/>
    </location>
    <ligand>
        <name>Zn(2+)</name>
        <dbReference type="ChEBI" id="CHEBI:29105"/>
        <label>1</label>
    </ligand>
</feature>
<feature type="binding site" evidence="1">
    <location>
        <position position="383"/>
    </location>
    <ligand>
        <name>Zn(2+)</name>
        <dbReference type="ChEBI" id="CHEBI:29105"/>
        <label>2</label>
    </ligand>
</feature>
<dbReference type="EC" id="3.4.11.4" evidence="1"/>
<dbReference type="EMBL" id="CP000425">
    <property type="protein sequence ID" value="ABJ73478.1"/>
    <property type="molecule type" value="Genomic_DNA"/>
</dbReference>
<dbReference type="RefSeq" id="WP_011676821.1">
    <property type="nucleotide sequence ID" value="NC_008527.1"/>
</dbReference>
<dbReference type="SMR" id="Q02X44"/>
<dbReference type="GeneID" id="61110139"/>
<dbReference type="KEGG" id="llc:LACR_1996"/>
<dbReference type="HOGENOM" id="CLU_053676_0_0_9"/>
<dbReference type="Proteomes" id="UP000000240">
    <property type="component" value="Chromosome"/>
</dbReference>
<dbReference type="GO" id="GO:0005829">
    <property type="term" value="C:cytosol"/>
    <property type="evidence" value="ECO:0007669"/>
    <property type="project" value="TreeGrafter"/>
</dbReference>
<dbReference type="GO" id="GO:0008237">
    <property type="term" value="F:metallopeptidase activity"/>
    <property type="evidence" value="ECO:0007669"/>
    <property type="project" value="UniProtKB-KW"/>
</dbReference>
<dbReference type="GO" id="GO:0045148">
    <property type="term" value="F:tripeptide aminopeptidase activity"/>
    <property type="evidence" value="ECO:0007669"/>
    <property type="project" value="UniProtKB-UniRule"/>
</dbReference>
<dbReference type="GO" id="GO:0008270">
    <property type="term" value="F:zinc ion binding"/>
    <property type="evidence" value="ECO:0007669"/>
    <property type="project" value="UniProtKB-UniRule"/>
</dbReference>
<dbReference type="GO" id="GO:0043171">
    <property type="term" value="P:peptide catabolic process"/>
    <property type="evidence" value="ECO:0007669"/>
    <property type="project" value="UniProtKB-UniRule"/>
</dbReference>
<dbReference type="GO" id="GO:0006508">
    <property type="term" value="P:proteolysis"/>
    <property type="evidence" value="ECO:0007669"/>
    <property type="project" value="UniProtKB-UniRule"/>
</dbReference>
<dbReference type="CDD" id="cd03892">
    <property type="entry name" value="M20_peptT"/>
    <property type="match status" value="1"/>
</dbReference>
<dbReference type="FunFam" id="3.30.70.360:FF:000002">
    <property type="entry name" value="Peptidase T"/>
    <property type="match status" value="1"/>
</dbReference>
<dbReference type="Gene3D" id="3.30.70.360">
    <property type="match status" value="1"/>
</dbReference>
<dbReference type="Gene3D" id="3.40.630.10">
    <property type="entry name" value="Zn peptidases"/>
    <property type="match status" value="1"/>
</dbReference>
<dbReference type="HAMAP" id="MF_00550">
    <property type="entry name" value="Aminopeptidase_M20"/>
    <property type="match status" value="1"/>
</dbReference>
<dbReference type="InterPro" id="IPR001261">
    <property type="entry name" value="ArgE/DapE_CS"/>
</dbReference>
<dbReference type="InterPro" id="IPR036264">
    <property type="entry name" value="Bact_exopeptidase_dim_dom"/>
</dbReference>
<dbReference type="InterPro" id="IPR002933">
    <property type="entry name" value="Peptidase_M20"/>
</dbReference>
<dbReference type="InterPro" id="IPR011650">
    <property type="entry name" value="Peptidase_M20_dimer"/>
</dbReference>
<dbReference type="InterPro" id="IPR010161">
    <property type="entry name" value="Peptidase_M20B"/>
</dbReference>
<dbReference type="NCBIfam" id="TIGR01882">
    <property type="entry name" value="peptidase-T"/>
    <property type="match status" value="1"/>
</dbReference>
<dbReference type="NCBIfam" id="NF003976">
    <property type="entry name" value="PRK05469.1"/>
    <property type="match status" value="1"/>
</dbReference>
<dbReference type="NCBIfam" id="NF009920">
    <property type="entry name" value="PRK13381.1"/>
    <property type="match status" value="1"/>
</dbReference>
<dbReference type="PANTHER" id="PTHR42994">
    <property type="entry name" value="PEPTIDASE T"/>
    <property type="match status" value="1"/>
</dbReference>
<dbReference type="PANTHER" id="PTHR42994:SF1">
    <property type="entry name" value="PEPTIDASE T"/>
    <property type="match status" value="1"/>
</dbReference>
<dbReference type="Pfam" id="PF07687">
    <property type="entry name" value="M20_dimer"/>
    <property type="match status" value="1"/>
</dbReference>
<dbReference type="Pfam" id="PF01546">
    <property type="entry name" value="Peptidase_M20"/>
    <property type="match status" value="1"/>
</dbReference>
<dbReference type="PIRSF" id="PIRSF037215">
    <property type="entry name" value="Peptidase_M20B"/>
    <property type="match status" value="1"/>
</dbReference>
<dbReference type="SUPFAM" id="SSF55031">
    <property type="entry name" value="Bacterial exopeptidase dimerisation domain"/>
    <property type="match status" value="1"/>
</dbReference>
<dbReference type="SUPFAM" id="SSF53187">
    <property type="entry name" value="Zn-dependent exopeptidases"/>
    <property type="match status" value="1"/>
</dbReference>
<dbReference type="PROSITE" id="PS00758">
    <property type="entry name" value="ARGE_DAPE_CPG2_1"/>
    <property type="match status" value="1"/>
</dbReference>
<dbReference type="PROSITE" id="PS00759">
    <property type="entry name" value="ARGE_DAPE_CPG2_2"/>
    <property type="match status" value="1"/>
</dbReference>
<evidence type="ECO:0000255" key="1">
    <source>
        <dbReference type="HAMAP-Rule" id="MF_00550"/>
    </source>
</evidence>
<proteinExistence type="inferred from homology"/>